<evidence type="ECO:0000255" key="1">
    <source>
        <dbReference type="HAMAP-Rule" id="MF_00004"/>
    </source>
</evidence>
<comment type="function">
    <text evidence="1">Catalyzes a salvage reaction resulting in the formation of AMP, that is energically less costly than de novo synthesis.</text>
</comment>
<comment type="catalytic activity">
    <reaction evidence="1">
        <text>AMP + diphosphate = 5-phospho-alpha-D-ribose 1-diphosphate + adenine</text>
        <dbReference type="Rhea" id="RHEA:16609"/>
        <dbReference type="ChEBI" id="CHEBI:16708"/>
        <dbReference type="ChEBI" id="CHEBI:33019"/>
        <dbReference type="ChEBI" id="CHEBI:58017"/>
        <dbReference type="ChEBI" id="CHEBI:456215"/>
        <dbReference type="EC" id="2.4.2.7"/>
    </reaction>
</comment>
<comment type="pathway">
    <text evidence="1">Purine metabolism; AMP biosynthesis via salvage pathway; AMP from adenine: step 1/1.</text>
</comment>
<comment type="subunit">
    <text evidence="1">Homodimer.</text>
</comment>
<comment type="subcellular location">
    <subcellularLocation>
        <location evidence="1">Cytoplasm</location>
    </subcellularLocation>
</comment>
<comment type="similarity">
    <text evidence="1">Belongs to the purine/pyrimidine phosphoribosyltransferase family.</text>
</comment>
<name>APT_CHRSD</name>
<feature type="chain" id="PRO_0000321355" description="Adenine phosphoribosyltransferase">
    <location>
        <begin position="1"/>
        <end position="181"/>
    </location>
</feature>
<protein>
    <recommendedName>
        <fullName evidence="1">Adenine phosphoribosyltransferase</fullName>
        <shortName evidence="1">APRT</shortName>
        <ecNumber evidence="1">2.4.2.7</ecNumber>
    </recommendedName>
</protein>
<organism>
    <name type="scientific">Chromohalobacter salexigens (strain ATCC BAA-138 / DSM 3043 / CIP 106854 / NCIMB 13768 / 1H11)</name>
    <dbReference type="NCBI Taxonomy" id="290398"/>
    <lineage>
        <taxon>Bacteria</taxon>
        <taxon>Pseudomonadati</taxon>
        <taxon>Pseudomonadota</taxon>
        <taxon>Gammaproteobacteria</taxon>
        <taxon>Oceanospirillales</taxon>
        <taxon>Halomonadaceae</taxon>
        <taxon>Chromohalobacter</taxon>
    </lineage>
</organism>
<gene>
    <name evidence="1" type="primary">apt</name>
    <name type="ordered locus">Csal_2098</name>
</gene>
<accession>Q1QVQ9</accession>
<sequence length="181" mass="19712">MSIYGDYIKSVIRTVPDWPQPGVNFRDITPVLQNSAAFRKLIDSFVHRYQELNLDAIAAIDARGFIIGAPVAYELGCSFVPVRKKGKLPFKTISETYTLEYGASTVELHSDAFREGDRILVMDDLIATGGTMLAAASLIQRSGGQVVETATIIDLPELGGAQKIRDAGHGVFAVCTFTENE</sequence>
<dbReference type="EC" id="2.4.2.7" evidence="1"/>
<dbReference type="EMBL" id="CP000285">
    <property type="protein sequence ID" value="ABE59449.1"/>
    <property type="molecule type" value="Genomic_DNA"/>
</dbReference>
<dbReference type="RefSeq" id="WP_011507395.1">
    <property type="nucleotide sequence ID" value="NC_007963.1"/>
</dbReference>
<dbReference type="SMR" id="Q1QVQ9"/>
<dbReference type="STRING" id="290398.Csal_2098"/>
<dbReference type="GeneID" id="95334813"/>
<dbReference type="KEGG" id="csa:Csal_2098"/>
<dbReference type="eggNOG" id="COG0503">
    <property type="taxonomic scope" value="Bacteria"/>
</dbReference>
<dbReference type="HOGENOM" id="CLU_063339_3_0_6"/>
<dbReference type="OrthoDB" id="9803963at2"/>
<dbReference type="UniPathway" id="UPA00588">
    <property type="reaction ID" value="UER00646"/>
</dbReference>
<dbReference type="Proteomes" id="UP000000239">
    <property type="component" value="Chromosome"/>
</dbReference>
<dbReference type="GO" id="GO:0005737">
    <property type="term" value="C:cytoplasm"/>
    <property type="evidence" value="ECO:0007669"/>
    <property type="project" value="UniProtKB-SubCell"/>
</dbReference>
<dbReference type="GO" id="GO:0002055">
    <property type="term" value="F:adenine binding"/>
    <property type="evidence" value="ECO:0007669"/>
    <property type="project" value="TreeGrafter"/>
</dbReference>
<dbReference type="GO" id="GO:0003999">
    <property type="term" value="F:adenine phosphoribosyltransferase activity"/>
    <property type="evidence" value="ECO:0007669"/>
    <property type="project" value="UniProtKB-UniRule"/>
</dbReference>
<dbReference type="GO" id="GO:0016208">
    <property type="term" value="F:AMP binding"/>
    <property type="evidence" value="ECO:0007669"/>
    <property type="project" value="TreeGrafter"/>
</dbReference>
<dbReference type="GO" id="GO:0006168">
    <property type="term" value="P:adenine salvage"/>
    <property type="evidence" value="ECO:0007669"/>
    <property type="project" value="InterPro"/>
</dbReference>
<dbReference type="GO" id="GO:0044209">
    <property type="term" value="P:AMP salvage"/>
    <property type="evidence" value="ECO:0007669"/>
    <property type="project" value="UniProtKB-UniRule"/>
</dbReference>
<dbReference type="GO" id="GO:0006166">
    <property type="term" value="P:purine ribonucleoside salvage"/>
    <property type="evidence" value="ECO:0007669"/>
    <property type="project" value="UniProtKB-KW"/>
</dbReference>
<dbReference type="CDD" id="cd06223">
    <property type="entry name" value="PRTases_typeI"/>
    <property type="match status" value="1"/>
</dbReference>
<dbReference type="FunFam" id="3.40.50.2020:FF:000021">
    <property type="entry name" value="Adenine phosphoribosyltransferase"/>
    <property type="match status" value="1"/>
</dbReference>
<dbReference type="Gene3D" id="3.40.50.2020">
    <property type="match status" value="1"/>
</dbReference>
<dbReference type="HAMAP" id="MF_00004">
    <property type="entry name" value="Aden_phosphoribosyltr"/>
    <property type="match status" value="1"/>
</dbReference>
<dbReference type="InterPro" id="IPR005764">
    <property type="entry name" value="Ade_phspho_trans"/>
</dbReference>
<dbReference type="InterPro" id="IPR000836">
    <property type="entry name" value="PRibTrfase_dom"/>
</dbReference>
<dbReference type="InterPro" id="IPR029057">
    <property type="entry name" value="PRTase-like"/>
</dbReference>
<dbReference type="InterPro" id="IPR050054">
    <property type="entry name" value="UPRTase/APRTase"/>
</dbReference>
<dbReference type="NCBIfam" id="TIGR01090">
    <property type="entry name" value="apt"/>
    <property type="match status" value="1"/>
</dbReference>
<dbReference type="NCBIfam" id="NF002634">
    <property type="entry name" value="PRK02304.1-3"/>
    <property type="match status" value="1"/>
</dbReference>
<dbReference type="NCBIfam" id="NF002636">
    <property type="entry name" value="PRK02304.1-5"/>
    <property type="match status" value="1"/>
</dbReference>
<dbReference type="PANTHER" id="PTHR32315">
    <property type="entry name" value="ADENINE PHOSPHORIBOSYLTRANSFERASE"/>
    <property type="match status" value="1"/>
</dbReference>
<dbReference type="PANTHER" id="PTHR32315:SF3">
    <property type="entry name" value="ADENINE PHOSPHORIBOSYLTRANSFERASE"/>
    <property type="match status" value="1"/>
</dbReference>
<dbReference type="Pfam" id="PF00156">
    <property type="entry name" value="Pribosyltran"/>
    <property type="match status" value="1"/>
</dbReference>
<dbReference type="SUPFAM" id="SSF53271">
    <property type="entry name" value="PRTase-like"/>
    <property type="match status" value="1"/>
</dbReference>
<dbReference type="PROSITE" id="PS00103">
    <property type="entry name" value="PUR_PYR_PR_TRANSFER"/>
    <property type="match status" value="1"/>
</dbReference>
<proteinExistence type="inferred from homology"/>
<reference key="1">
    <citation type="journal article" date="2011" name="Stand. Genomic Sci.">
        <title>Complete genome sequence of the halophilic and highly halotolerant Chromohalobacter salexigens type strain (1H11(T)).</title>
        <authorList>
            <person name="Copeland A."/>
            <person name="O'Connor K."/>
            <person name="Lucas S."/>
            <person name="Lapidus A."/>
            <person name="Berry K.W."/>
            <person name="Detter J.C."/>
            <person name="Del Rio T.G."/>
            <person name="Hammon N."/>
            <person name="Dalin E."/>
            <person name="Tice H."/>
            <person name="Pitluck S."/>
            <person name="Bruce D."/>
            <person name="Goodwin L."/>
            <person name="Han C."/>
            <person name="Tapia R."/>
            <person name="Saunders E."/>
            <person name="Schmutz J."/>
            <person name="Brettin T."/>
            <person name="Larimer F."/>
            <person name="Land M."/>
            <person name="Hauser L."/>
            <person name="Vargas C."/>
            <person name="Nieto J.J."/>
            <person name="Kyrpides N.C."/>
            <person name="Ivanova N."/>
            <person name="Goker M."/>
            <person name="Klenk H.P."/>
            <person name="Csonka L.N."/>
            <person name="Woyke T."/>
        </authorList>
    </citation>
    <scope>NUCLEOTIDE SEQUENCE [LARGE SCALE GENOMIC DNA]</scope>
    <source>
        <strain>ATCC BAA-138 / DSM 3043 / CIP 106854 / NCIMB 13768 / 1H11</strain>
    </source>
</reference>
<keyword id="KW-0963">Cytoplasm</keyword>
<keyword id="KW-0328">Glycosyltransferase</keyword>
<keyword id="KW-0660">Purine salvage</keyword>
<keyword id="KW-1185">Reference proteome</keyword>
<keyword id="KW-0808">Transferase</keyword>